<feature type="chain" id="PRO_1000013397" description="Large ribosomal subunit protein bL34">
    <location>
        <begin position="1"/>
        <end position="44"/>
    </location>
</feature>
<sequence length="44" mass="5067">MKRTYQPSKVKRARTHGFLTRMKTRGGRAVIAARRAKGRKRLAV</sequence>
<comment type="similarity">
    <text evidence="1">Belongs to the bacterial ribosomal protein bL34 family.</text>
</comment>
<keyword id="KW-1185">Reference proteome</keyword>
<keyword id="KW-0687">Ribonucleoprotein</keyword>
<keyword id="KW-0689">Ribosomal protein</keyword>
<proteinExistence type="inferred from homology"/>
<gene>
    <name evidence="1" type="primary">rpmH</name>
    <name type="ordered locus">Bpro_4908</name>
</gene>
<protein>
    <recommendedName>
        <fullName evidence="1">Large ribosomal subunit protein bL34</fullName>
    </recommendedName>
    <alternativeName>
        <fullName evidence="2">50S ribosomal protein L34</fullName>
    </alternativeName>
</protein>
<evidence type="ECO:0000255" key="1">
    <source>
        <dbReference type="HAMAP-Rule" id="MF_00391"/>
    </source>
</evidence>
<evidence type="ECO:0000305" key="2"/>
<accession>Q121K8</accession>
<name>RL34_POLSJ</name>
<dbReference type="EMBL" id="CP000316">
    <property type="protein sequence ID" value="ABE46784.1"/>
    <property type="molecule type" value="Genomic_DNA"/>
</dbReference>
<dbReference type="RefSeq" id="WP_007862708.1">
    <property type="nucleotide sequence ID" value="NZ_FNHX01000015.1"/>
</dbReference>
<dbReference type="SMR" id="Q121K8"/>
<dbReference type="STRING" id="296591.Bpro_4908"/>
<dbReference type="KEGG" id="pol:Bpro_4908"/>
<dbReference type="eggNOG" id="COG0230">
    <property type="taxonomic scope" value="Bacteria"/>
</dbReference>
<dbReference type="HOGENOM" id="CLU_129938_2_0_4"/>
<dbReference type="Proteomes" id="UP000001983">
    <property type="component" value="Chromosome"/>
</dbReference>
<dbReference type="GO" id="GO:1990904">
    <property type="term" value="C:ribonucleoprotein complex"/>
    <property type="evidence" value="ECO:0007669"/>
    <property type="project" value="UniProtKB-KW"/>
</dbReference>
<dbReference type="GO" id="GO:0005840">
    <property type="term" value="C:ribosome"/>
    <property type="evidence" value="ECO:0007669"/>
    <property type="project" value="UniProtKB-KW"/>
</dbReference>
<dbReference type="GO" id="GO:0003735">
    <property type="term" value="F:structural constituent of ribosome"/>
    <property type="evidence" value="ECO:0007669"/>
    <property type="project" value="InterPro"/>
</dbReference>
<dbReference type="GO" id="GO:0006412">
    <property type="term" value="P:translation"/>
    <property type="evidence" value="ECO:0007669"/>
    <property type="project" value="UniProtKB-UniRule"/>
</dbReference>
<dbReference type="FunFam" id="1.10.287.3980:FF:000001">
    <property type="entry name" value="Mitochondrial ribosomal protein L34"/>
    <property type="match status" value="1"/>
</dbReference>
<dbReference type="Gene3D" id="1.10.287.3980">
    <property type="match status" value="1"/>
</dbReference>
<dbReference type="HAMAP" id="MF_00391">
    <property type="entry name" value="Ribosomal_bL34"/>
    <property type="match status" value="1"/>
</dbReference>
<dbReference type="InterPro" id="IPR000271">
    <property type="entry name" value="Ribosomal_bL34"/>
</dbReference>
<dbReference type="InterPro" id="IPR020939">
    <property type="entry name" value="Ribosomal_bL34_CS"/>
</dbReference>
<dbReference type="NCBIfam" id="TIGR01030">
    <property type="entry name" value="rpmH_bact"/>
    <property type="match status" value="1"/>
</dbReference>
<dbReference type="PANTHER" id="PTHR14503:SF4">
    <property type="entry name" value="LARGE RIBOSOMAL SUBUNIT PROTEIN BL34M"/>
    <property type="match status" value="1"/>
</dbReference>
<dbReference type="PANTHER" id="PTHR14503">
    <property type="entry name" value="MITOCHONDRIAL RIBOSOMAL PROTEIN 34 FAMILY MEMBER"/>
    <property type="match status" value="1"/>
</dbReference>
<dbReference type="Pfam" id="PF00468">
    <property type="entry name" value="Ribosomal_L34"/>
    <property type="match status" value="1"/>
</dbReference>
<dbReference type="PROSITE" id="PS00784">
    <property type="entry name" value="RIBOSOMAL_L34"/>
    <property type="match status" value="1"/>
</dbReference>
<organism>
    <name type="scientific">Polaromonas sp. (strain JS666 / ATCC BAA-500)</name>
    <dbReference type="NCBI Taxonomy" id="296591"/>
    <lineage>
        <taxon>Bacteria</taxon>
        <taxon>Pseudomonadati</taxon>
        <taxon>Pseudomonadota</taxon>
        <taxon>Betaproteobacteria</taxon>
        <taxon>Burkholderiales</taxon>
        <taxon>Comamonadaceae</taxon>
        <taxon>Polaromonas</taxon>
    </lineage>
</organism>
<reference key="1">
    <citation type="journal article" date="2008" name="Appl. Environ. Microbiol.">
        <title>The genome of Polaromonas sp. strain JS666: insights into the evolution of a hydrocarbon- and xenobiotic-degrading bacterium, and features of relevance to biotechnology.</title>
        <authorList>
            <person name="Mattes T.E."/>
            <person name="Alexander A.K."/>
            <person name="Richardson P.M."/>
            <person name="Munk A.C."/>
            <person name="Han C.S."/>
            <person name="Stothard P."/>
            <person name="Coleman N.V."/>
        </authorList>
    </citation>
    <scope>NUCLEOTIDE SEQUENCE [LARGE SCALE GENOMIC DNA]</scope>
    <source>
        <strain>JS666 / ATCC BAA-500</strain>
    </source>
</reference>